<organism>
    <name type="scientific">Salmonella paratyphi A (strain ATCC 9150 / SARB42)</name>
    <dbReference type="NCBI Taxonomy" id="295319"/>
    <lineage>
        <taxon>Bacteria</taxon>
        <taxon>Pseudomonadati</taxon>
        <taxon>Pseudomonadota</taxon>
        <taxon>Gammaproteobacteria</taxon>
        <taxon>Enterobacterales</taxon>
        <taxon>Enterobacteriaceae</taxon>
        <taxon>Salmonella</taxon>
    </lineage>
</organism>
<keyword id="KW-0378">Hydrolase</keyword>
<keyword id="KW-0719">Serine esterase</keyword>
<comment type="function">
    <text evidence="1">Catalyzes the hydrolysis of esters.</text>
</comment>
<comment type="catalytic activity">
    <reaction evidence="1">
        <text>a carboxylic ester + H2O = an alcohol + a carboxylate + H(+)</text>
        <dbReference type="Rhea" id="RHEA:21164"/>
        <dbReference type="ChEBI" id="CHEBI:15377"/>
        <dbReference type="ChEBI" id="CHEBI:15378"/>
        <dbReference type="ChEBI" id="CHEBI:29067"/>
        <dbReference type="ChEBI" id="CHEBI:30879"/>
        <dbReference type="ChEBI" id="CHEBI:33308"/>
        <dbReference type="EC" id="3.1.1.1"/>
    </reaction>
</comment>
<comment type="similarity">
    <text evidence="1">Belongs to the FrsA family.</text>
</comment>
<protein>
    <recommendedName>
        <fullName evidence="1">Esterase FrsA</fullName>
        <ecNumber evidence="1">3.1.1.1</ecNumber>
    </recommendedName>
</protein>
<feature type="chain" id="PRO_1000064486" description="Esterase FrsA">
    <location>
        <begin position="1"/>
        <end position="414"/>
    </location>
</feature>
<reference key="1">
    <citation type="journal article" date="2004" name="Nat. Genet.">
        <title>Comparison of genome degradation in Paratyphi A and Typhi, human-restricted serovars of Salmonella enterica that cause typhoid.</title>
        <authorList>
            <person name="McClelland M."/>
            <person name="Sanderson K.E."/>
            <person name="Clifton S.W."/>
            <person name="Latreille P."/>
            <person name="Porwollik S."/>
            <person name="Sabo A."/>
            <person name="Meyer R."/>
            <person name="Bieri T."/>
            <person name="Ozersky P."/>
            <person name="McLellan M."/>
            <person name="Harkins C.R."/>
            <person name="Wang C."/>
            <person name="Nguyen C."/>
            <person name="Berghoff A."/>
            <person name="Elliott G."/>
            <person name="Kohlberg S."/>
            <person name="Strong C."/>
            <person name="Du F."/>
            <person name="Carter J."/>
            <person name="Kremizki C."/>
            <person name="Layman D."/>
            <person name="Leonard S."/>
            <person name="Sun H."/>
            <person name="Fulton L."/>
            <person name="Nash W."/>
            <person name="Miner T."/>
            <person name="Minx P."/>
            <person name="Delehaunty K."/>
            <person name="Fronick C."/>
            <person name="Magrini V."/>
            <person name="Nhan M."/>
            <person name="Warren W."/>
            <person name="Florea L."/>
            <person name="Spieth J."/>
            <person name="Wilson R.K."/>
        </authorList>
    </citation>
    <scope>NUCLEOTIDE SEQUENCE [LARGE SCALE GENOMIC DNA]</scope>
    <source>
        <strain>ATCC 9150 / SARB42</strain>
    </source>
</reference>
<evidence type="ECO:0000255" key="1">
    <source>
        <dbReference type="HAMAP-Rule" id="MF_01063"/>
    </source>
</evidence>
<proteinExistence type="inferred from homology"/>
<sequence length="414" mass="47141">MTQANLSETLFKPRFKHTETSTLVRRFNRGSQPPMQSALDGKNVPHWYRMINRLMWIWRGVDPREILDVQARIVMSDAERTDDDLYDTVIGYRGGNWIYEWAKQAMDWQQKACQEQDAMRSGRYWLHASTLYNIAAYPHLKGDELAEQAQALANRAYEEAAQRLPGSLREMEFAVPGGSPVTAFLHMPKGDGPFPTVLMCGGLDAMQTDYYTLYERYFAPRGIAMLTLDMPSVGFSSKWKLTQDSSLLHQHVLKALPNVPWVDHTRVAAFGFRFGANVAVRLAYLEAPRLKAVACLGPVVHALLSDPQRQSTVPEMYLDVLASRLGMHDASDEALRVELNRYSLKVQGLLGRRCPTPMLSGFWKNDPFSPEEESRLITTSSSDGKLIEIPFNPVYRNFDHALQEITDWINHRLC</sequence>
<dbReference type="EC" id="3.1.1.1" evidence="1"/>
<dbReference type="EMBL" id="CP000026">
    <property type="protein sequence ID" value="AAV78317.1"/>
    <property type="molecule type" value="Genomic_DNA"/>
</dbReference>
<dbReference type="RefSeq" id="WP_000189586.1">
    <property type="nucleotide sequence ID" value="NC_006511.1"/>
</dbReference>
<dbReference type="SMR" id="Q5PF65"/>
<dbReference type="ESTHER" id="salty-yafa">
    <property type="family name" value="Duf_1100-R"/>
</dbReference>
<dbReference type="KEGG" id="spt:SPA2437"/>
<dbReference type="HOGENOM" id="CLU_036819_0_0_6"/>
<dbReference type="Proteomes" id="UP000008185">
    <property type="component" value="Chromosome"/>
</dbReference>
<dbReference type="GO" id="GO:0106435">
    <property type="term" value="F:carboxylesterase activity"/>
    <property type="evidence" value="ECO:0007669"/>
    <property type="project" value="UniProtKB-EC"/>
</dbReference>
<dbReference type="FunFam" id="3.40.50.1820:FF:000022">
    <property type="entry name" value="Esterase FrsA"/>
    <property type="match status" value="1"/>
</dbReference>
<dbReference type="Gene3D" id="3.40.50.1820">
    <property type="entry name" value="alpha/beta hydrolase"/>
    <property type="match status" value="1"/>
</dbReference>
<dbReference type="HAMAP" id="MF_01063">
    <property type="entry name" value="FrsA"/>
    <property type="match status" value="1"/>
</dbReference>
<dbReference type="InterPro" id="IPR029058">
    <property type="entry name" value="AB_hydrolase_fold"/>
</dbReference>
<dbReference type="InterPro" id="IPR043423">
    <property type="entry name" value="FrsA"/>
</dbReference>
<dbReference type="InterPro" id="IPR010520">
    <property type="entry name" value="FrsA-like"/>
</dbReference>
<dbReference type="InterPro" id="IPR050261">
    <property type="entry name" value="FrsA_esterase"/>
</dbReference>
<dbReference type="NCBIfam" id="NF003460">
    <property type="entry name" value="PRK05077.1"/>
    <property type="match status" value="1"/>
</dbReference>
<dbReference type="PANTHER" id="PTHR22946">
    <property type="entry name" value="DIENELACTONE HYDROLASE DOMAIN-CONTAINING PROTEIN-RELATED"/>
    <property type="match status" value="1"/>
</dbReference>
<dbReference type="PANTHER" id="PTHR22946:SF4">
    <property type="entry name" value="ESTERASE FRSA"/>
    <property type="match status" value="1"/>
</dbReference>
<dbReference type="Pfam" id="PF06500">
    <property type="entry name" value="FrsA-like"/>
    <property type="match status" value="1"/>
</dbReference>
<dbReference type="SUPFAM" id="SSF53474">
    <property type="entry name" value="alpha/beta-Hydrolases"/>
    <property type="match status" value="1"/>
</dbReference>
<name>FRSA_SALPA</name>
<gene>
    <name evidence="1" type="primary">frsA</name>
    <name type="ordered locus">SPA2437</name>
</gene>
<accession>Q5PF65</accession>